<name>HIS6_BRUO2</name>
<comment type="function">
    <text evidence="1">IGPS catalyzes the conversion of PRFAR and glutamine to IGP, AICAR and glutamate. The HisF subunit catalyzes the cyclization activity that produces IGP and AICAR from PRFAR using the ammonia provided by the HisH subunit.</text>
</comment>
<comment type="catalytic activity">
    <reaction evidence="1">
        <text>5-[(5-phospho-1-deoxy-D-ribulos-1-ylimino)methylamino]-1-(5-phospho-beta-D-ribosyl)imidazole-4-carboxamide + L-glutamine = D-erythro-1-(imidazol-4-yl)glycerol 3-phosphate + 5-amino-1-(5-phospho-beta-D-ribosyl)imidazole-4-carboxamide + L-glutamate + H(+)</text>
        <dbReference type="Rhea" id="RHEA:24793"/>
        <dbReference type="ChEBI" id="CHEBI:15378"/>
        <dbReference type="ChEBI" id="CHEBI:29985"/>
        <dbReference type="ChEBI" id="CHEBI:58278"/>
        <dbReference type="ChEBI" id="CHEBI:58359"/>
        <dbReference type="ChEBI" id="CHEBI:58475"/>
        <dbReference type="ChEBI" id="CHEBI:58525"/>
        <dbReference type="EC" id="4.3.2.10"/>
    </reaction>
</comment>
<comment type="pathway">
    <text evidence="1">Amino-acid biosynthesis; L-histidine biosynthesis; L-histidine from 5-phospho-alpha-D-ribose 1-diphosphate: step 5/9.</text>
</comment>
<comment type="subunit">
    <text evidence="1">Heterodimer of HisH and HisF.</text>
</comment>
<comment type="subcellular location">
    <subcellularLocation>
        <location evidence="1">Cytoplasm</location>
    </subcellularLocation>
</comment>
<comment type="similarity">
    <text evidence="1">Belongs to the HisA/HisF family.</text>
</comment>
<gene>
    <name evidence="1" type="primary">hisF</name>
    <name type="ordered locus">BOV_2005</name>
</gene>
<accession>A5VT43</accession>
<keyword id="KW-0028">Amino-acid biosynthesis</keyword>
<keyword id="KW-0963">Cytoplasm</keyword>
<keyword id="KW-0368">Histidine biosynthesis</keyword>
<keyword id="KW-0456">Lyase</keyword>
<evidence type="ECO:0000255" key="1">
    <source>
        <dbReference type="HAMAP-Rule" id="MF_01013"/>
    </source>
</evidence>
<protein>
    <recommendedName>
        <fullName evidence="1">Imidazole glycerol phosphate synthase subunit HisF</fullName>
        <ecNumber evidence="1">4.3.2.10</ecNumber>
    </recommendedName>
    <alternativeName>
        <fullName evidence="1">IGP synthase cyclase subunit</fullName>
    </alternativeName>
    <alternativeName>
        <fullName evidence="1">IGP synthase subunit HisF</fullName>
    </alternativeName>
    <alternativeName>
        <fullName evidence="1">ImGP synthase subunit HisF</fullName>
        <shortName evidence="1">IGPS subunit HisF</shortName>
    </alternativeName>
</protein>
<feature type="chain" id="PRO_1000063033" description="Imidazole glycerol phosphate synthase subunit HisF">
    <location>
        <begin position="1"/>
        <end position="261"/>
    </location>
</feature>
<feature type="active site" evidence="1">
    <location>
        <position position="12"/>
    </location>
</feature>
<feature type="active site" evidence="1">
    <location>
        <position position="131"/>
    </location>
</feature>
<sequence length="261" mass="27474">MTLKARVIPCLDVKDGRVVKGVNFVDLIDAGDPVEAARAYDAAGADELCFLDITASSDNRETIFDVVARTAEQCFMPLTVGGGVRQVADIRKLLLAGADKVSINTAAVKNPEFVAEAADKFGNQCIVVAIDAKKVSGAGENDRWEIFTHGGRQPTGIDAVEFAQKVVDLGAGEILLTSMDRDGTKAGYDVALTRAVADSVRAPVIASGGVGTLDHLVAGIRDGHATAVLAASIFHFGTYTIGEAKRYMAEAGIPMRLDPVR</sequence>
<organism>
    <name type="scientific">Brucella ovis (strain ATCC 25840 / 63/290 / NCTC 10512)</name>
    <dbReference type="NCBI Taxonomy" id="444178"/>
    <lineage>
        <taxon>Bacteria</taxon>
        <taxon>Pseudomonadati</taxon>
        <taxon>Pseudomonadota</taxon>
        <taxon>Alphaproteobacteria</taxon>
        <taxon>Hyphomicrobiales</taxon>
        <taxon>Brucellaceae</taxon>
        <taxon>Brucella/Ochrobactrum group</taxon>
        <taxon>Brucella</taxon>
    </lineage>
</organism>
<proteinExistence type="inferred from homology"/>
<dbReference type="EC" id="4.3.2.10" evidence="1"/>
<dbReference type="EMBL" id="CP000708">
    <property type="protein sequence ID" value="ABQ60296.1"/>
    <property type="molecule type" value="Genomic_DNA"/>
</dbReference>
<dbReference type="RefSeq" id="WP_002965151.1">
    <property type="nucleotide sequence ID" value="NC_009505.1"/>
</dbReference>
<dbReference type="SMR" id="A5VT43"/>
<dbReference type="GeneID" id="97534652"/>
<dbReference type="KEGG" id="bov:BOV_2005"/>
<dbReference type="HOGENOM" id="CLU_048577_4_0_5"/>
<dbReference type="PhylomeDB" id="A5VT43"/>
<dbReference type="UniPathway" id="UPA00031">
    <property type="reaction ID" value="UER00010"/>
</dbReference>
<dbReference type="PRO" id="PR:A5VT43"/>
<dbReference type="Proteomes" id="UP000006383">
    <property type="component" value="Chromosome I"/>
</dbReference>
<dbReference type="GO" id="GO:0005737">
    <property type="term" value="C:cytoplasm"/>
    <property type="evidence" value="ECO:0007669"/>
    <property type="project" value="UniProtKB-SubCell"/>
</dbReference>
<dbReference type="GO" id="GO:0000107">
    <property type="term" value="F:imidazoleglycerol-phosphate synthase activity"/>
    <property type="evidence" value="ECO:0007669"/>
    <property type="project" value="UniProtKB-UniRule"/>
</dbReference>
<dbReference type="GO" id="GO:0016829">
    <property type="term" value="F:lyase activity"/>
    <property type="evidence" value="ECO:0007669"/>
    <property type="project" value="UniProtKB-KW"/>
</dbReference>
<dbReference type="GO" id="GO:0000105">
    <property type="term" value="P:L-histidine biosynthetic process"/>
    <property type="evidence" value="ECO:0007669"/>
    <property type="project" value="UniProtKB-UniRule"/>
</dbReference>
<dbReference type="CDD" id="cd04731">
    <property type="entry name" value="HisF"/>
    <property type="match status" value="1"/>
</dbReference>
<dbReference type="FunFam" id="3.20.20.70:FF:000006">
    <property type="entry name" value="Imidazole glycerol phosphate synthase subunit HisF"/>
    <property type="match status" value="1"/>
</dbReference>
<dbReference type="Gene3D" id="3.20.20.70">
    <property type="entry name" value="Aldolase class I"/>
    <property type="match status" value="1"/>
</dbReference>
<dbReference type="HAMAP" id="MF_01013">
    <property type="entry name" value="HisF"/>
    <property type="match status" value="1"/>
</dbReference>
<dbReference type="InterPro" id="IPR013785">
    <property type="entry name" value="Aldolase_TIM"/>
</dbReference>
<dbReference type="InterPro" id="IPR006062">
    <property type="entry name" value="His_biosynth"/>
</dbReference>
<dbReference type="InterPro" id="IPR004651">
    <property type="entry name" value="HisF"/>
</dbReference>
<dbReference type="InterPro" id="IPR050064">
    <property type="entry name" value="IGPS_HisA/HisF"/>
</dbReference>
<dbReference type="InterPro" id="IPR011060">
    <property type="entry name" value="RibuloseP-bd_barrel"/>
</dbReference>
<dbReference type="NCBIfam" id="TIGR00735">
    <property type="entry name" value="hisF"/>
    <property type="match status" value="1"/>
</dbReference>
<dbReference type="PANTHER" id="PTHR21235:SF2">
    <property type="entry name" value="IMIDAZOLE GLYCEROL PHOSPHATE SYNTHASE HISHF"/>
    <property type="match status" value="1"/>
</dbReference>
<dbReference type="PANTHER" id="PTHR21235">
    <property type="entry name" value="IMIDAZOLE GLYCEROL PHOSPHATE SYNTHASE SUBUNIT HISF/H IGP SYNTHASE SUBUNIT HISF/H"/>
    <property type="match status" value="1"/>
</dbReference>
<dbReference type="Pfam" id="PF00977">
    <property type="entry name" value="His_biosynth"/>
    <property type="match status" value="1"/>
</dbReference>
<dbReference type="SUPFAM" id="SSF51366">
    <property type="entry name" value="Ribulose-phoshate binding barrel"/>
    <property type="match status" value="1"/>
</dbReference>
<reference key="1">
    <citation type="journal article" date="2009" name="PLoS ONE">
        <title>Genome degradation in Brucella ovis corresponds with narrowing of its host range and tissue tropism.</title>
        <authorList>
            <person name="Tsolis R.M."/>
            <person name="Seshadri R."/>
            <person name="Santos R.L."/>
            <person name="Sangari F.J."/>
            <person name="Lobo J.M."/>
            <person name="de Jong M.F."/>
            <person name="Ren Q."/>
            <person name="Myers G."/>
            <person name="Brinkac L.M."/>
            <person name="Nelson W.C."/>
            <person name="Deboy R.T."/>
            <person name="Angiuoli S."/>
            <person name="Khouri H."/>
            <person name="Dimitrov G."/>
            <person name="Robinson J.R."/>
            <person name="Mulligan S."/>
            <person name="Walker R.L."/>
            <person name="Elzer P.E."/>
            <person name="Hassan K.A."/>
            <person name="Paulsen I.T."/>
        </authorList>
    </citation>
    <scope>NUCLEOTIDE SEQUENCE [LARGE SCALE GENOMIC DNA]</scope>
    <source>
        <strain>ATCC 25840 / 63/290 / NCTC 10512</strain>
    </source>
</reference>